<dbReference type="EC" id="2.1.2.3" evidence="1"/>
<dbReference type="EC" id="3.5.4.10" evidence="1"/>
<dbReference type="EMBL" id="CP001230">
    <property type="protein sequence ID" value="ACO04517.1"/>
    <property type="molecule type" value="Genomic_DNA"/>
</dbReference>
<dbReference type="RefSeq" id="WP_012676755.1">
    <property type="nucleotide sequence ID" value="NC_012440.1"/>
</dbReference>
<dbReference type="SMR" id="C0QRH2"/>
<dbReference type="STRING" id="123214.PERMA_1500"/>
<dbReference type="PaxDb" id="123214-PERMA_1500"/>
<dbReference type="KEGG" id="pmx:PERMA_1500"/>
<dbReference type="eggNOG" id="COG0138">
    <property type="taxonomic scope" value="Bacteria"/>
</dbReference>
<dbReference type="HOGENOM" id="CLU_016316_5_2_0"/>
<dbReference type="OrthoDB" id="9802065at2"/>
<dbReference type="UniPathway" id="UPA00074">
    <property type="reaction ID" value="UER00133"/>
</dbReference>
<dbReference type="UniPathway" id="UPA00074">
    <property type="reaction ID" value="UER00135"/>
</dbReference>
<dbReference type="Proteomes" id="UP000001366">
    <property type="component" value="Chromosome"/>
</dbReference>
<dbReference type="GO" id="GO:0005829">
    <property type="term" value="C:cytosol"/>
    <property type="evidence" value="ECO:0007669"/>
    <property type="project" value="TreeGrafter"/>
</dbReference>
<dbReference type="GO" id="GO:0003937">
    <property type="term" value="F:IMP cyclohydrolase activity"/>
    <property type="evidence" value="ECO:0007669"/>
    <property type="project" value="UniProtKB-UniRule"/>
</dbReference>
<dbReference type="GO" id="GO:0004643">
    <property type="term" value="F:phosphoribosylaminoimidazolecarboxamide formyltransferase activity"/>
    <property type="evidence" value="ECO:0007669"/>
    <property type="project" value="UniProtKB-UniRule"/>
</dbReference>
<dbReference type="GO" id="GO:0006189">
    <property type="term" value="P:'de novo' IMP biosynthetic process"/>
    <property type="evidence" value="ECO:0007669"/>
    <property type="project" value="UniProtKB-UniRule"/>
</dbReference>
<dbReference type="CDD" id="cd01421">
    <property type="entry name" value="IMPCH"/>
    <property type="match status" value="1"/>
</dbReference>
<dbReference type="FunFam" id="3.40.140.20:FF:000001">
    <property type="entry name" value="Bifunctional purine biosynthesis protein PurH"/>
    <property type="match status" value="1"/>
</dbReference>
<dbReference type="FunFam" id="3.40.140.20:FF:000002">
    <property type="entry name" value="Bifunctional purine biosynthesis protein PurH"/>
    <property type="match status" value="1"/>
</dbReference>
<dbReference type="FunFam" id="3.40.50.1380:FF:000001">
    <property type="entry name" value="Bifunctional purine biosynthesis protein PurH"/>
    <property type="match status" value="1"/>
</dbReference>
<dbReference type="Gene3D" id="3.40.140.20">
    <property type="match status" value="2"/>
</dbReference>
<dbReference type="Gene3D" id="3.40.50.1380">
    <property type="entry name" value="Methylglyoxal synthase-like domain"/>
    <property type="match status" value="1"/>
</dbReference>
<dbReference type="HAMAP" id="MF_00139">
    <property type="entry name" value="PurH"/>
    <property type="match status" value="1"/>
</dbReference>
<dbReference type="InterPro" id="IPR024051">
    <property type="entry name" value="AICAR_Tfase_dup_dom_sf"/>
</dbReference>
<dbReference type="InterPro" id="IPR016193">
    <property type="entry name" value="Cytidine_deaminase-like"/>
</dbReference>
<dbReference type="InterPro" id="IPR011607">
    <property type="entry name" value="MGS-like_dom"/>
</dbReference>
<dbReference type="InterPro" id="IPR036914">
    <property type="entry name" value="MGS-like_dom_sf"/>
</dbReference>
<dbReference type="InterPro" id="IPR002695">
    <property type="entry name" value="PurH-like"/>
</dbReference>
<dbReference type="NCBIfam" id="NF002049">
    <property type="entry name" value="PRK00881.1"/>
    <property type="match status" value="1"/>
</dbReference>
<dbReference type="NCBIfam" id="TIGR00355">
    <property type="entry name" value="purH"/>
    <property type="match status" value="1"/>
</dbReference>
<dbReference type="PANTHER" id="PTHR11692:SF0">
    <property type="entry name" value="BIFUNCTIONAL PURINE BIOSYNTHESIS PROTEIN ATIC"/>
    <property type="match status" value="1"/>
</dbReference>
<dbReference type="PANTHER" id="PTHR11692">
    <property type="entry name" value="BIFUNCTIONAL PURINE BIOSYNTHESIS PROTEIN PURH"/>
    <property type="match status" value="1"/>
</dbReference>
<dbReference type="Pfam" id="PF01808">
    <property type="entry name" value="AICARFT_IMPCHas"/>
    <property type="match status" value="1"/>
</dbReference>
<dbReference type="Pfam" id="PF02142">
    <property type="entry name" value="MGS"/>
    <property type="match status" value="1"/>
</dbReference>
<dbReference type="PIRSF" id="PIRSF000414">
    <property type="entry name" value="AICARFT_IMPCHas"/>
    <property type="match status" value="1"/>
</dbReference>
<dbReference type="SMART" id="SM00798">
    <property type="entry name" value="AICARFT_IMPCHas"/>
    <property type="match status" value="1"/>
</dbReference>
<dbReference type="SMART" id="SM00851">
    <property type="entry name" value="MGS"/>
    <property type="match status" value="1"/>
</dbReference>
<dbReference type="SUPFAM" id="SSF53927">
    <property type="entry name" value="Cytidine deaminase-like"/>
    <property type="match status" value="1"/>
</dbReference>
<dbReference type="SUPFAM" id="SSF52335">
    <property type="entry name" value="Methylglyoxal synthase-like"/>
    <property type="match status" value="1"/>
</dbReference>
<dbReference type="PROSITE" id="PS51855">
    <property type="entry name" value="MGS"/>
    <property type="match status" value="1"/>
</dbReference>
<name>PUR9_PERMH</name>
<gene>
    <name evidence="1" type="primary">purH</name>
    <name type="ordered locus">PERMA_1500</name>
</gene>
<evidence type="ECO:0000255" key="1">
    <source>
        <dbReference type="HAMAP-Rule" id="MF_00139"/>
    </source>
</evidence>
<evidence type="ECO:0000255" key="2">
    <source>
        <dbReference type="PROSITE-ProRule" id="PRU01202"/>
    </source>
</evidence>
<protein>
    <recommendedName>
        <fullName evidence="1">Bifunctional purine biosynthesis protein PurH</fullName>
    </recommendedName>
    <domain>
        <recommendedName>
            <fullName evidence="1">Phosphoribosylaminoimidazolecarboxamide formyltransferase</fullName>
            <ecNumber evidence="1">2.1.2.3</ecNumber>
        </recommendedName>
        <alternativeName>
            <fullName evidence="1">AICAR transformylase</fullName>
        </alternativeName>
    </domain>
    <domain>
        <recommendedName>
            <fullName evidence="1">IMP cyclohydrolase</fullName>
            <ecNumber evidence="1">3.5.4.10</ecNumber>
        </recommendedName>
        <alternativeName>
            <fullName evidence="1">ATIC</fullName>
        </alternativeName>
        <alternativeName>
            <fullName evidence="1">IMP synthase</fullName>
        </alternativeName>
        <alternativeName>
            <fullName evidence="1">Inosinicase</fullName>
        </alternativeName>
    </domain>
</protein>
<reference key="1">
    <citation type="journal article" date="2009" name="J. Bacteriol.">
        <title>Complete and draft genome sequences of six members of the Aquificales.</title>
        <authorList>
            <person name="Reysenbach A.-L."/>
            <person name="Hamamura N."/>
            <person name="Podar M."/>
            <person name="Griffiths E."/>
            <person name="Ferreira S."/>
            <person name="Hochstein R."/>
            <person name="Heidelberg J."/>
            <person name="Johnson J."/>
            <person name="Mead D."/>
            <person name="Pohorille A."/>
            <person name="Sarmiento M."/>
            <person name="Schweighofer K."/>
            <person name="Seshadri R."/>
            <person name="Voytek M.A."/>
        </authorList>
    </citation>
    <scope>NUCLEOTIDE SEQUENCE [LARGE SCALE GENOMIC DNA]</scope>
    <source>
        <strain>DSM 14350 / EX-H1</strain>
    </source>
</reference>
<feature type="chain" id="PRO_1000122967" description="Bifunctional purine biosynthesis protein PurH">
    <location>
        <begin position="1"/>
        <end position="515"/>
    </location>
</feature>
<feature type="domain" description="MGS-like" evidence="2">
    <location>
        <begin position="1"/>
        <end position="144"/>
    </location>
</feature>
<keyword id="KW-0378">Hydrolase</keyword>
<keyword id="KW-0511">Multifunctional enzyme</keyword>
<keyword id="KW-0658">Purine biosynthesis</keyword>
<keyword id="KW-1185">Reference proteome</keyword>
<keyword id="KW-0808">Transferase</keyword>
<sequence>MGRKALISVSDKTGVVEFAKELEKLGFQIISSSGTARVLKENGIDVTEVSDITGFPEIMGGRVKTLHPKIHGGLLAVRDNPEYMKQLEEQGIEPIDIVAINLYPFEQTVRKGADLDEIIENIDIGGPAMVRASAKNHKFVTIIVDPEDYGSVISELKEKGETSLETRRKLALKAFRHTAFYDSVISSVLNEKFGIDEKFPEEFSVPFRKKDTLRYGENPHQEAAVYISPVEYKGLSVAESEVLHGKEMSYNNFLDVEAAVNLVKEFDETACVIVKHNNPCGVAISHTPEKAYREALSRDPKSAFGGIVAFNRSVDIDTAKALTEIFLEVIVAPDFDKDAFDYLTEKKKNLRLVKIKNFDKKAEGPDYRRISGGILVQDRDTQLYNELKVVTDREPTDKEMEDLLFAWKVVKHVKSNSVVIAKNKATVGIGPGQTSRVDSLETAVKKAEEFNLDTEGSVLASEAFFPFRDSVDQAAKYGIKAIIQPGGSIRDNEVIQAANEHGIAMVFTGMRHFKH</sequence>
<comment type="catalytic activity">
    <reaction evidence="1">
        <text>(6R)-10-formyltetrahydrofolate + 5-amino-1-(5-phospho-beta-D-ribosyl)imidazole-4-carboxamide = 5-formamido-1-(5-phospho-D-ribosyl)imidazole-4-carboxamide + (6S)-5,6,7,8-tetrahydrofolate</text>
        <dbReference type="Rhea" id="RHEA:22192"/>
        <dbReference type="ChEBI" id="CHEBI:57453"/>
        <dbReference type="ChEBI" id="CHEBI:58467"/>
        <dbReference type="ChEBI" id="CHEBI:58475"/>
        <dbReference type="ChEBI" id="CHEBI:195366"/>
        <dbReference type="EC" id="2.1.2.3"/>
    </reaction>
</comment>
<comment type="catalytic activity">
    <reaction evidence="1">
        <text>IMP + H2O = 5-formamido-1-(5-phospho-D-ribosyl)imidazole-4-carboxamide</text>
        <dbReference type="Rhea" id="RHEA:18445"/>
        <dbReference type="ChEBI" id="CHEBI:15377"/>
        <dbReference type="ChEBI" id="CHEBI:58053"/>
        <dbReference type="ChEBI" id="CHEBI:58467"/>
        <dbReference type="EC" id="3.5.4.10"/>
    </reaction>
</comment>
<comment type="pathway">
    <text evidence="1">Purine metabolism; IMP biosynthesis via de novo pathway; 5-formamido-1-(5-phospho-D-ribosyl)imidazole-4-carboxamide from 5-amino-1-(5-phospho-D-ribosyl)imidazole-4-carboxamide (10-formyl THF route): step 1/1.</text>
</comment>
<comment type="pathway">
    <text evidence="1">Purine metabolism; IMP biosynthesis via de novo pathway; IMP from 5-formamido-1-(5-phospho-D-ribosyl)imidazole-4-carboxamide: step 1/1.</text>
</comment>
<comment type="domain">
    <text evidence="1">The IMP cyclohydrolase activity resides in the N-terminal region.</text>
</comment>
<comment type="similarity">
    <text evidence="1">Belongs to the PurH family.</text>
</comment>
<proteinExistence type="inferred from homology"/>
<accession>C0QRH2</accession>
<organism>
    <name type="scientific">Persephonella marina (strain DSM 14350 / EX-H1)</name>
    <dbReference type="NCBI Taxonomy" id="123214"/>
    <lineage>
        <taxon>Bacteria</taxon>
        <taxon>Pseudomonadati</taxon>
        <taxon>Aquificota</taxon>
        <taxon>Aquificia</taxon>
        <taxon>Aquificales</taxon>
        <taxon>Hydrogenothermaceae</taxon>
        <taxon>Persephonella</taxon>
    </lineage>
</organism>